<dbReference type="EMBL" id="CT573326">
    <property type="protein sequence ID" value="CAK16549.1"/>
    <property type="molecule type" value="Genomic_DNA"/>
</dbReference>
<dbReference type="SMR" id="Q1I733"/>
<dbReference type="STRING" id="384676.PSEEN3834"/>
<dbReference type="KEGG" id="pen:PSEEN3834"/>
<dbReference type="eggNOG" id="COG1706">
    <property type="taxonomic scope" value="Bacteria"/>
</dbReference>
<dbReference type="HOGENOM" id="CLU_045235_1_0_6"/>
<dbReference type="OrthoDB" id="9786431at2"/>
<dbReference type="Proteomes" id="UP000000658">
    <property type="component" value="Chromosome"/>
</dbReference>
<dbReference type="GO" id="GO:0009428">
    <property type="term" value="C:bacterial-type flagellum basal body, distal rod, P ring"/>
    <property type="evidence" value="ECO:0007669"/>
    <property type="project" value="InterPro"/>
</dbReference>
<dbReference type="GO" id="GO:0030288">
    <property type="term" value="C:outer membrane-bounded periplasmic space"/>
    <property type="evidence" value="ECO:0007669"/>
    <property type="project" value="InterPro"/>
</dbReference>
<dbReference type="GO" id="GO:0005198">
    <property type="term" value="F:structural molecule activity"/>
    <property type="evidence" value="ECO:0007669"/>
    <property type="project" value="InterPro"/>
</dbReference>
<dbReference type="GO" id="GO:0071973">
    <property type="term" value="P:bacterial-type flagellum-dependent cell motility"/>
    <property type="evidence" value="ECO:0007669"/>
    <property type="project" value="InterPro"/>
</dbReference>
<dbReference type="HAMAP" id="MF_00416">
    <property type="entry name" value="FlgI"/>
    <property type="match status" value="1"/>
</dbReference>
<dbReference type="InterPro" id="IPR001782">
    <property type="entry name" value="Flag_FlgI"/>
</dbReference>
<dbReference type="NCBIfam" id="NF003676">
    <property type="entry name" value="PRK05303.1"/>
    <property type="match status" value="1"/>
</dbReference>
<dbReference type="PANTHER" id="PTHR30381">
    <property type="entry name" value="FLAGELLAR P-RING PERIPLASMIC PROTEIN FLGI"/>
    <property type="match status" value="1"/>
</dbReference>
<dbReference type="PANTHER" id="PTHR30381:SF0">
    <property type="entry name" value="FLAGELLAR P-RING PROTEIN"/>
    <property type="match status" value="1"/>
</dbReference>
<dbReference type="Pfam" id="PF02119">
    <property type="entry name" value="FlgI"/>
    <property type="match status" value="1"/>
</dbReference>
<dbReference type="PRINTS" id="PR01010">
    <property type="entry name" value="FLGPRINGFLGI"/>
</dbReference>
<keyword id="KW-0975">Bacterial flagellum</keyword>
<keyword id="KW-0574">Periplasm</keyword>
<keyword id="KW-0732">Signal</keyword>
<sequence length="369" mass="38245">MFNARRLIAATLLMSCAFGAHAERLKDIASISGVRANQLIGYGLVVGLNGTGDQTTQTPFTLQTFNNMLSQFGIKVPPGSGNVQLKNVAAVSVHADLPPFAKPGQVVDITVSSIGNSKSLRGGSLLMTPLKGIDGNVYAIAQGNLVVGGFDAEGRDGSKITVNVPSAGRIPGGASVERAVPSGFNQGNSLTLNLNRPDFTTAKRIVDKVNELLGPGVAQAVDGGSVRVTAPMDPSQRVDYLSILENLEIDPGQAVAKVIINSRTGTIVIGQNVKVSPAAVTHGSLTVTITEDPIVSQPGPFSNGQTAVVPRSRVNAQQEAKPMFKFGPGTTLDEIVRAVNQVGAAPSDLMAILEALKQAGALQADLIVI</sequence>
<gene>
    <name evidence="1" type="primary">flgI</name>
    <name type="ordered locus">PSEEN3834</name>
</gene>
<comment type="function">
    <text evidence="1">Assembles around the rod to form the L-ring and probably protects the motor/basal body from shearing forces during rotation.</text>
</comment>
<comment type="subunit">
    <text evidence="1">The basal body constitutes a major portion of the flagellar organelle and consists of four rings (L,P,S, and M) mounted on a central rod.</text>
</comment>
<comment type="subcellular location">
    <subcellularLocation>
        <location evidence="1">Periplasm</location>
    </subcellularLocation>
    <subcellularLocation>
        <location evidence="1">Bacterial flagellum basal body</location>
    </subcellularLocation>
</comment>
<comment type="similarity">
    <text evidence="1">Belongs to the FlgI family.</text>
</comment>
<organism>
    <name type="scientific">Pseudomonas entomophila (strain L48)</name>
    <dbReference type="NCBI Taxonomy" id="384676"/>
    <lineage>
        <taxon>Bacteria</taxon>
        <taxon>Pseudomonadati</taxon>
        <taxon>Pseudomonadota</taxon>
        <taxon>Gammaproteobacteria</taxon>
        <taxon>Pseudomonadales</taxon>
        <taxon>Pseudomonadaceae</taxon>
        <taxon>Pseudomonas</taxon>
    </lineage>
</organism>
<reference key="1">
    <citation type="journal article" date="2006" name="Nat. Biotechnol.">
        <title>Complete genome sequence of the entomopathogenic and metabolically versatile soil bacterium Pseudomonas entomophila.</title>
        <authorList>
            <person name="Vodovar N."/>
            <person name="Vallenet D."/>
            <person name="Cruveiller S."/>
            <person name="Rouy Z."/>
            <person name="Barbe V."/>
            <person name="Acosta C."/>
            <person name="Cattolico L."/>
            <person name="Jubin C."/>
            <person name="Lajus A."/>
            <person name="Segurens B."/>
            <person name="Vacherie B."/>
            <person name="Wincker P."/>
            <person name="Weissenbach J."/>
            <person name="Lemaitre B."/>
            <person name="Medigue C."/>
            <person name="Boccard F."/>
        </authorList>
    </citation>
    <scope>NUCLEOTIDE SEQUENCE [LARGE SCALE GENOMIC DNA]</scope>
    <source>
        <strain>L48</strain>
    </source>
</reference>
<feature type="signal peptide" evidence="1">
    <location>
        <begin position="1"/>
        <end position="22"/>
    </location>
</feature>
<feature type="chain" id="PRO_1000050115" description="Flagellar P-ring protein">
    <location>
        <begin position="23"/>
        <end position="369"/>
    </location>
</feature>
<proteinExistence type="inferred from homology"/>
<accession>Q1I733</accession>
<evidence type="ECO:0000255" key="1">
    <source>
        <dbReference type="HAMAP-Rule" id="MF_00416"/>
    </source>
</evidence>
<protein>
    <recommendedName>
        <fullName evidence="1">Flagellar P-ring protein</fullName>
    </recommendedName>
    <alternativeName>
        <fullName evidence="1">Basal body P-ring protein</fullName>
    </alternativeName>
</protein>
<name>FLGI_PSEE4</name>